<dbReference type="EMBL" id="X93590">
    <property type="protein sequence ID" value="CAA63788.1"/>
    <property type="molecule type" value="Genomic_DNA"/>
</dbReference>
<dbReference type="EMBL" id="CU329670">
    <property type="protein sequence ID" value="CAB77010.1"/>
    <property type="molecule type" value="Genomic_DNA"/>
</dbReference>
<dbReference type="PIR" id="T46560">
    <property type="entry name" value="T46560"/>
</dbReference>
<dbReference type="RefSeq" id="NP_001018264.1">
    <property type="nucleotide sequence ID" value="NM_001019690.2"/>
</dbReference>
<dbReference type="BioGRID" id="280532">
    <property type="interactions" value="22"/>
</dbReference>
<dbReference type="ComplexPortal" id="CPX-25785">
    <property type="entry name" value="SWI5-SWI2 mating-type switching complex"/>
</dbReference>
<dbReference type="FunCoup" id="Q10668">
    <property type="interactions" value="54"/>
</dbReference>
<dbReference type="IntAct" id="Q10668">
    <property type="interactions" value="3"/>
</dbReference>
<dbReference type="STRING" id="284812.Q10668"/>
<dbReference type="SwissPalm" id="Q10668"/>
<dbReference type="PaxDb" id="4896-SPAC1142.03c.1"/>
<dbReference type="EnsemblFungi" id="SPAC1142.03c.1">
    <property type="protein sequence ID" value="SPAC1142.03c.1:pep"/>
    <property type="gene ID" value="SPAC1142.03c"/>
</dbReference>
<dbReference type="GeneID" id="3361456"/>
<dbReference type="KEGG" id="spo:3361456"/>
<dbReference type="PomBase" id="SPAC1142.03c">
    <property type="gene designation" value="swi2"/>
</dbReference>
<dbReference type="VEuPathDB" id="FungiDB:SPAC1142.03c"/>
<dbReference type="HOGENOM" id="CLU_383179_0_0_1"/>
<dbReference type="InParanoid" id="Q10668"/>
<dbReference type="OMA" id="LKFTTML"/>
<dbReference type="PRO" id="PR:Q10668"/>
<dbReference type="Proteomes" id="UP000002485">
    <property type="component" value="Chromosome I"/>
</dbReference>
<dbReference type="GO" id="GO:0031934">
    <property type="term" value="C:mating-type region heterochromatin"/>
    <property type="evidence" value="ECO:0000314"/>
    <property type="project" value="PomBase"/>
</dbReference>
<dbReference type="GO" id="GO:0005730">
    <property type="term" value="C:nucleolus"/>
    <property type="evidence" value="ECO:0007005"/>
    <property type="project" value="PomBase"/>
</dbReference>
<dbReference type="GO" id="GO:0005634">
    <property type="term" value="C:nucleus"/>
    <property type="evidence" value="ECO:0000314"/>
    <property type="project" value="PomBase"/>
</dbReference>
<dbReference type="GO" id="GO:0034974">
    <property type="term" value="C:Swi5-Swi2 complex"/>
    <property type="evidence" value="ECO:0000353"/>
    <property type="project" value="PomBase"/>
</dbReference>
<dbReference type="GO" id="GO:1990837">
    <property type="term" value="F:sequence-specific double-stranded DNA binding"/>
    <property type="evidence" value="ECO:0000314"/>
    <property type="project" value="PomBase"/>
</dbReference>
<dbReference type="GO" id="GO:0006310">
    <property type="term" value="P:DNA recombination"/>
    <property type="evidence" value="ECO:0000318"/>
    <property type="project" value="GO_Central"/>
</dbReference>
<dbReference type="GO" id="GO:0007535">
    <property type="term" value="P:donor selection"/>
    <property type="evidence" value="ECO:0000314"/>
    <property type="project" value="PomBase"/>
</dbReference>
<dbReference type="GO" id="GO:0007534">
    <property type="term" value="P:gene conversion at mating-type locus"/>
    <property type="evidence" value="ECO:0000314"/>
    <property type="project" value="PomBase"/>
</dbReference>
<dbReference type="Gene3D" id="6.10.140.1020">
    <property type="match status" value="1"/>
</dbReference>
<dbReference type="PANTHER" id="PTHR28527:SF2">
    <property type="entry name" value="MATING-TYPE SWITCHING PROTEIN SWI2"/>
    <property type="match status" value="1"/>
</dbReference>
<dbReference type="PANTHER" id="PTHR28527">
    <property type="entry name" value="MATING-TYPE SWITCHING PROTEIN SWI2-RELATED"/>
    <property type="match status" value="1"/>
</dbReference>
<feature type="chain" id="PRO_0000072349" description="Mating-type switching protein swi2">
    <location>
        <begin position="1"/>
        <end position="722"/>
    </location>
</feature>
<feature type="region of interest" description="Disordered" evidence="1">
    <location>
        <begin position="1"/>
        <end position="35"/>
    </location>
</feature>
<feature type="region of interest" description="Disordered" evidence="1">
    <location>
        <begin position="301"/>
        <end position="342"/>
    </location>
</feature>
<feature type="compositionally biased region" description="Polar residues" evidence="1">
    <location>
        <begin position="9"/>
        <end position="22"/>
    </location>
</feature>
<feature type="compositionally biased region" description="Acidic residues" evidence="1">
    <location>
        <begin position="302"/>
        <end position="316"/>
    </location>
</feature>
<feature type="compositionally biased region" description="Polar residues" evidence="1">
    <location>
        <begin position="319"/>
        <end position="332"/>
    </location>
</feature>
<sequence>MNVNKKQESIPVNTGSESISSNDNERFEQGKGVGSNLGSHFFEPVEYYYSDGKPMNQTEASQMKGTFSRDFSLNEMNNEFITDSFFCTTTPDPKTESPSFVKYNAHCDDHPEISGHVSSNDKDFAYFEDKSENQPLVTLPNENNQVIEPLSSQSCKSQLSTQNYSESDFGWNQLCDLDPIFKSLAFTDDTNLFPAFADSEAALIMLKKREMTRVKHRAGRPRKYSYVNKDLNFEEGLPRRRGRPTGWRKYPEKEEIYPTLSPRIKKPRKVFDAVVIPVTIKPSIYTEPSLPHHIDWNNGCSEEFDFEPSREDEDFPDLTSDSTGQDPLSSEPTIFDISPLPSDMEPTFSENSLITINKMAIEERKQSRRLEQPLAESQHQEDLLNPYGVDQDFDETCINESEQQATHIPNSSIKFNYDYTPPKSATSHKHKRVDLLASRKENVWTGLYGKVQTEMVSNRGEAVLNENNSKNRTNVTKPNSYKNSVLSIGNNHSNHSNIIKPNTYKNTILSNENNTPNYSNVCLSTSLINRSLPSLKSTMHPGVNKDLITRPFKNVNKMSVRKALIKPFHPPISKISRTRLTVSSPERLYCAKPISMATAPSETDSKLINRIRNLELEIGGLKEQLSVVELALDTDKNSKQIQVVERKIQNWRKSAQLAVEVLFPVFSLKFTTMLQEVPQSVLRTSANDLRTKPCSIGTYLEQLQIPFHLLQYNSETESWDLE</sequence>
<reference key="1">
    <citation type="submission" date="1995-11" db="EMBL/GenBank/DDBJ databases">
        <authorList>
            <person name="Brandt U."/>
            <person name="Schmidt H."/>
        </authorList>
    </citation>
    <scope>NUCLEOTIDE SEQUENCE [GENOMIC DNA]</scope>
    <source>
        <strain>972 / ATCC 24843</strain>
    </source>
</reference>
<reference key="2">
    <citation type="journal article" date="2002" name="Nature">
        <title>The genome sequence of Schizosaccharomyces pombe.</title>
        <authorList>
            <person name="Wood V."/>
            <person name="Gwilliam R."/>
            <person name="Rajandream M.A."/>
            <person name="Lyne M.H."/>
            <person name="Lyne R."/>
            <person name="Stewart A."/>
            <person name="Sgouros J.G."/>
            <person name="Peat N."/>
            <person name="Hayles J."/>
            <person name="Baker S.G."/>
            <person name="Basham D."/>
            <person name="Bowman S."/>
            <person name="Brooks K."/>
            <person name="Brown D."/>
            <person name="Brown S."/>
            <person name="Chillingworth T."/>
            <person name="Churcher C.M."/>
            <person name="Collins M."/>
            <person name="Connor R."/>
            <person name="Cronin A."/>
            <person name="Davis P."/>
            <person name="Feltwell T."/>
            <person name="Fraser A."/>
            <person name="Gentles S."/>
            <person name="Goble A."/>
            <person name="Hamlin N."/>
            <person name="Harris D.E."/>
            <person name="Hidalgo J."/>
            <person name="Hodgson G."/>
            <person name="Holroyd S."/>
            <person name="Hornsby T."/>
            <person name="Howarth S."/>
            <person name="Huckle E.J."/>
            <person name="Hunt S."/>
            <person name="Jagels K."/>
            <person name="James K.D."/>
            <person name="Jones L."/>
            <person name="Jones M."/>
            <person name="Leather S."/>
            <person name="McDonald S."/>
            <person name="McLean J."/>
            <person name="Mooney P."/>
            <person name="Moule S."/>
            <person name="Mungall K.L."/>
            <person name="Murphy L.D."/>
            <person name="Niblett D."/>
            <person name="Odell C."/>
            <person name="Oliver K."/>
            <person name="O'Neil S."/>
            <person name="Pearson D."/>
            <person name="Quail M.A."/>
            <person name="Rabbinowitsch E."/>
            <person name="Rutherford K.M."/>
            <person name="Rutter S."/>
            <person name="Saunders D."/>
            <person name="Seeger K."/>
            <person name="Sharp S."/>
            <person name="Skelton J."/>
            <person name="Simmonds M.N."/>
            <person name="Squares R."/>
            <person name="Squares S."/>
            <person name="Stevens K."/>
            <person name="Taylor K."/>
            <person name="Taylor R.G."/>
            <person name="Tivey A."/>
            <person name="Walsh S.V."/>
            <person name="Warren T."/>
            <person name="Whitehead S."/>
            <person name="Woodward J.R."/>
            <person name="Volckaert G."/>
            <person name="Aert R."/>
            <person name="Robben J."/>
            <person name="Grymonprez B."/>
            <person name="Weltjens I."/>
            <person name="Vanstreels E."/>
            <person name="Rieger M."/>
            <person name="Schaefer M."/>
            <person name="Mueller-Auer S."/>
            <person name="Gabel C."/>
            <person name="Fuchs M."/>
            <person name="Duesterhoeft A."/>
            <person name="Fritzc C."/>
            <person name="Holzer E."/>
            <person name="Moestl D."/>
            <person name="Hilbert H."/>
            <person name="Borzym K."/>
            <person name="Langer I."/>
            <person name="Beck A."/>
            <person name="Lehrach H."/>
            <person name="Reinhardt R."/>
            <person name="Pohl T.M."/>
            <person name="Eger P."/>
            <person name="Zimmermann W."/>
            <person name="Wedler H."/>
            <person name="Wambutt R."/>
            <person name="Purnelle B."/>
            <person name="Goffeau A."/>
            <person name="Cadieu E."/>
            <person name="Dreano S."/>
            <person name="Gloux S."/>
            <person name="Lelaure V."/>
            <person name="Mottier S."/>
            <person name="Galibert F."/>
            <person name="Aves S.J."/>
            <person name="Xiang Z."/>
            <person name="Hunt C."/>
            <person name="Moore K."/>
            <person name="Hurst S.M."/>
            <person name="Lucas M."/>
            <person name="Rochet M."/>
            <person name="Gaillardin C."/>
            <person name="Tallada V.A."/>
            <person name="Garzon A."/>
            <person name="Thode G."/>
            <person name="Daga R.R."/>
            <person name="Cruzado L."/>
            <person name="Jimenez J."/>
            <person name="Sanchez M."/>
            <person name="del Rey F."/>
            <person name="Benito J."/>
            <person name="Dominguez A."/>
            <person name="Revuelta J.L."/>
            <person name="Moreno S."/>
            <person name="Armstrong J."/>
            <person name="Forsburg S.L."/>
            <person name="Cerutti L."/>
            <person name="Lowe T."/>
            <person name="McCombie W.R."/>
            <person name="Paulsen I."/>
            <person name="Potashkin J."/>
            <person name="Shpakovski G.V."/>
            <person name="Ussery D."/>
            <person name="Barrell B.G."/>
            <person name="Nurse P."/>
        </authorList>
    </citation>
    <scope>NUCLEOTIDE SEQUENCE [LARGE SCALE GENOMIC DNA]</scope>
    <source>
        <strain>972 / ATCC 24843</strain>
    </source>
</reference>
<reference key="3">
    <citation type="journal article" date="2003" name="Proc. Natl. Acad. Sci. U.S.A.">
        <title>Two different Swi5-containing protein complexes are involved in mating-type switching and recombination repair in fission yeast.</title>
        <authorList>
            <person name="Akamatsu Y."/>
            <person name="Dziadkowiec D."/>
            <person name="Ikeguchi M."/>
            <person name="Shinagawa H."/>
            <person name="Iwasaki H."/>
        </authorList>
    </citation>
    <scope>FUNCTION</scope>
    <scope>INTERACTION WITH SWI5 AND RHP51</scope>
</reference>
<name>SWI2_SCHPO</name>
<keyword id="KW-0131">Cell cycle</keyword>
<keyword id="KW-1185">Reference proteome</keyword>
<gene>
    <name type="primary">swi2</name>
    <name type="ORF">SPAC1142.03c</name>
    <name type="ORF">SPAC17G6.20c</name>
</gene>
<accession>Q10668</accession>
<comment type="function">
    <text evidence="2">Required for normal mating-type switching.</text>
</comment>
<comment type="subunit">
    <text evidence="2">Interacts with swi5 and rhp51.</text>
</comment>
<comment type="interaction">
    <interactant intactId="EBI-926914">
        <id>Q10668</id>
    </interactant>
    <interactant intactId="EBI-926960">
        <id>P36601</id>
        <label>rhp51</label>
    </interactant>
    <organismsDiffer>false</organismsDiffer>
    <experiments>3</experiments>
</comment>
<comment type="interaction">
    <interactant intactId="EBI-926914">
        <id>Q10668</id>
    </interactant>
    <interactant intactId="EBI-926902">
        <id>Q9UUB7</id>
        <label>swi5</label>
    </interactant>
    <organismsDiffer>false</organismsDiffer>
    <experiments>5</experiments>
</comment>
<evidence type="ECO:0000256" key="1">
    <source>
        <dbReference type="SAM" id="MobiDB-lite"/>
    </source>
</evidence>
<evidence type="ECO:0000269" key="2">
    <source>
    </source>
</evidence>
<protein>
    <recommendedName>
        <fullName>Mating-type switching protein swi2</fullName>
    </recommendedName>
</protein>
<organism>
    <name type="scientific">Schizosaccharomyces pombe (strain 972 / ATCC 24843)</name>
    <name type="common">Fission yeast</name>
    <dbReference type="NCBI Taxonomy" id="284812"/>
    <lineage>
        <taxon>Eukaryota</taxon>
        <taxon>Fungi</taxon>
        <taxon>Dikarya</taxon>
        <taxon>Ascomycota</taxon>
        <taxon>Taphrinomycotina</taxon>
        <taxon>Schizosaccharomycetes</taxon>
        <taxon>Schizosaccharomycetales</taxon>
        <taxon>Schizosaccharomycetaceae</taxon>
        <taxon>Schizosaccharomyces</taxon>
    </lineage>
</organism>
<proteinExistence type="evidence at protein level"/>